<feature type="chain" id="PRO_0000138571" description="Peptide methionine sulfoxide reductase MsrA 1">
    <location>
        <begin position="1"/>
        <end position="172"/>
    </location>
</feature>
<feature type="active site" evidence="1">
    <location>
        <position position="14"/>
    </location>
</feature>
<gene>
    <name type="primary">msrA1</name>
    <name type="ordered locus">mll1760</name>
</gene>
<comment type="function">
    <text evidence="1">Has an important function as a repair enzyme for proteins that have been inactivated by oxidation. Catalyzes the reversible oxidation-reduction of methionine sulfoxide in proteins to methionine (By similarity).</text>
</comment>
<comment type="catalytic activity">
    <reaction>
        <text>L-methionyl-[protein] + [thioredoxin]-disulfide + H2O = L-methionyl-(S)-S-oxide-[protein] + [thioredoxin]-dithiol</text>
        <dbReference type="Rhea" id="RHEA:14217"/>
        <dbReference type="Rhea" id="RHEA-COMP:10698"/>
        <dbReference type="Rhea" id="RHEA-COMP:10700"/>
        <dbReference type="Rhea" id="RHEA-COMP:12313"/>
        <dbReference type="Rhea" id="RHEA-COMP:12315"/>
        <dbReference type="ChEBI" id="CHEBI:15377"/>
        <dbReference type="ChEBI" id="CHEBI:16044"/>
        <dbReference type="ChEBI" id="CHEBI:29950"/>
        <dbReference type="ChEBI" id="CHEBI:44120"/>
        <dbReference type="ChEBI" id="CHEBI:50058"/>
        <dbReference type="EC" id="1.8.4.11"/>
    </reaction>
</comment>
<comment type="catalytic activity">
    <reaction>
        <text>[thioredoxin]-disulfide + L-methionine + H2O = L-methionine (S)-S-oxide + [thioredoxin]-dithiol</text>
        <dbReference type="Rhea" id="RHEA:19993"/>
        <dbReference type="Rhea" id="RHEA-COMP:10698"/>
        <dbReference type="Rhea" id="RHEA-COMP:10700"/>
        <dbReference type="ChEBI" id="CHEBI:15377"/>
        <dbReference type="ChEBI" id="CHEBI:29950"/>
        <dbReference type="ChEBI" id="CHEBI:50058"/>
        <dbReference type="ChEBI" id="CHEBI:57844"/>
        <dbReference type="ChEBI" id="CHEBI:58772"/>
        <dbReference type="EC" id="1.8.4.11"/>
    </reaction>
</comment>
<comment type="similarity">
    <text evidence="2">Belongs to the MsrA Met sulfoxide reductase family.</text>
</comment>
<sequence>MATSTERAVLAGGCFWGMQDLIRRYPGVISTRVGYSGGDVANATYRNHGTHAEAIEINFDPAVISYRTLLERFFQIHDPTTRNRQGNDVGMSYRSAIYYTSDEQKRVAEDTIADVDASGLWPGKVVTEVAPAGAFWEAEPEHQDYLEKYPNGYTCHFVRPGWKLPVREKAVS</sequence>
<keyword id="KW-0560">Oxidoreductase</keyword>
<proteinExistence type="inferred from homology"/>
<evidence type="ECO:0000250" key="1"/>
<evidence type="ECO:0000305" key="2"/>
<accession>Q98JV5</accession>
<dbReference type="EC" id="1.8.4.11"/>
<dbReference type="EMBL" id="BA000012">
    <property type="protein sequence ID" value="BAB49060.1"/>
    <property type="molecule type" value="Genomic_DNA"/>
</dbReference>
<dbReference type="RefSeq" id="WP_010910412.1">
    <property type="nucleotide sequence ID" value="NC_002678.2"/>
</dbReference>
<dbReference type="SMR" id="Q98JV5"/>
<dbReference type="KEGG" id="mlo:mll1760"/>
<dbReference type="PATRIC" id="fig|266835.9.peg.1420"/>
<dbReference type="eggNOG" id="COG0225">
    <property type="taxonomic scope" value="Bacteria"/>
</dbReference>
<dbReference type="HOGENOM" id="CLU_031040_10_2_5"/>
<dbReference type="Proteomes" id="UP000000552">
    <property type="component" value="Chromosome"/>
</dbReference>
<dbReference type="GO" id="GO:0033744">
    <property type="term" value="F:L-methionine:thioredoxin-disulfide S-oxidoreductase activity"/>
    <property type="evidence" value="ECO:0007669"/>
    <property type="project" value="RHEA"/>
</dbReference>
<dbReference type="GO" id="GO:0008113">
    <property type="term" value="F:peptide-methionine (S)-S-oxide reductase activity"/>
    <property type="evidence" value="ECO:0007669"/>
    <property type="project" value="UniProtKB-UniRule"/>
</dbReference>
<dbReference type="GO" id="GO:0036211">
    <property type="term" value="P:protein modification process"/>
    <property type="evidence" value="ECO:0007669"/>
    <property type="project" value="UniProtKB-UniRule"/>
</dbReference>
<dbReference type="FunFam" id="3.30.1060.10:FF:000005">
    <property type="entry name" value="Peptide methionine sulfoxide reductase MsrA"/>
    <property type="match status" value="1"/>
</dbReference>
<dbReference type="Gene3D" id="3.30.1060.10">
    <property type="entry name" value="Peptide methionine sulphoxide reductase MsrA"/>
    <property type="match status" value="1"/>
</dbReference>
<dbReference type="HAMAP" id="MF_01401">
    <property type="entry name" value="MsrA"/>
    <property type="match status" value="1"/>
</dbReference>
<dbReference type="InterPro" id="IPR002569">
    <property type="entry name" value="Met_Sox_Rdtase_MsrA_dom"/>
</dbReference>
<dbReference type="InterPro" id="IPR036509">
    <property type="entry name" value="Met_Sox_Rdtase_MsrA_sf"/>
</dbReference>
<dbReference type="NCBIfam" id="TIGR00401">
    <property type="entry name" value="msrA"/>
    <property type="match status" value="1"/>
</dbReference>
<dbReference type="PANTHER" id="PTHR43774">
    <property type="entry name" value="PEPTIDE METHIONINE SULFOXIDE REDUCTASE"/>
    <property type="match status" value="1"/>
</dbReference>
<dbReference type="PANTHER" id="PTHR43774:SF1">
    <property type="entry name" value="PEPTIDE METHIONINE SULFOXIDE REDUCTASE MSRA 2"/>
    <property type="match status" value="1"/>
</dbReference>
<dbReference type="Pfam" id="PF01625">
    <property type="entry name" value="PMSR"/>
    <property type="match status" value="1"/>
</dbReference>
<dbReference type="SUPFAM" id="SSF55068">
    <property type="entry name" value="Peptide methionine sulfoxide reductase"/>
    <property type="match status" value="1"/>
</dbReference>
<reference key="1">
    <citation type="journal article" date="2000" name="DNA Res.">
        <title>Complete genome structure of the nitrogen-fixing symbiotic bacterium Mesorhizobium loti.</title>
        <authorList>
            <person name="Kaneko T."/>
            <person name="Nakamura Y."/>
            <person name="Sato S."/>
            <person name="Asamizu E."/>
            <person name="Kato T."/>
            <person name="Sasamoto S."/>
            <person name="Watanabe A."/>
            <person name="Idesawa K."/>
            <person name="Ishikawa A."/>
            <person name="Kawashima K."/>
            <person name="Kimura T."/>
            <person name="Kishida Y."/>
            <person name="Kiyokawa C."/>
            <person name="Kohara M."/>
            <person name="Matsumoto M."/>
            <person name="Matsuno A."/>
            <person name="Mochizuki Y."/>
            <person name="Nakayama S."/>
            <person name="Nakazaki N."/>
            <person name="Shimpo S."/>
            <person name="Sugimoto M."/>
            <person name="Takeuchi C."/>
            <person name="Yamada M."/>
            <person name="Tabata S."/>
        </authorList>
    </citation>
    <scope>NUCLEOTIDE SEQUENCE [LARGE SCALE GENOMIC DNA]</scope>
    <source>
        <strain>LMG 29417 / CECT 9101 / MAFF 303099</strain>
    </source>
</reference>
<organism>
    <name type="scientific">Mesorhizobium japonicum (strain LMG 29417 / CECT 9101 / MAFF 303099)</name>
    <name type="common">Mesorhizobium loti (strain MAFF 303099)</name>
    <dbReference type="NCBI Taxonomy" id="266835"/>
    <lineage>
        <taxon>Bacteria</taxon>
        <taxon>Pseudomonadati</taxon>
        <taxon>Pseudomonadota</taxon>
        <taxon>Alphaproteobacteria</taxon>
        <taxon>Hyphomicrobiales</taxon>
        <taxon>Phyllobacteriaceae</taxon>
        <taxon>Mesorhizobium</taxon>
    </lineage>
</organism>
<name>MSRA1_RHILO</name>
<protein>
    <recommendedName>
        <fullName>Peptide methionine sulfoxide reductase MsrA 1</fullName>
        <shortName>Protein-methionine-S-oxide reductase 1</shortName>
        <ecNumber>1.8.4.11</ecNumber>
    </recommendedName>
    <alternativeName>
        <fullName>Peptide-methionine (S)-S-oxide reductase 1</fullName>
        <shortName>Peptide Met(O) reductase 1</shortName>
    </alternativeName>
</protein>